<reference key="1">
    <citation type="journal article" date="2006" name="Lancet">
        <title>Complete genome sequence of USA300, an epidemic clone of community-acquired meticillin-resistant Staphylococcus aureus.</title>
        <authorList>
            <person name="Diep B.A."/>
            <person name="Gill S.R."/>
            <person name="Chang R.F."/>
            <person name="Phan T.H."/>
            <person name="Chen J.H."/>
            <person name="Davidson M.G."/>
            <person name="Lin F."/>
            <person name="Lin J."/>
            <person name="Carleton H.A."/>
            <person name="Mongodin E.F."/>
            <person name="Sensabaugh G.F."/>
            <person name="Perdreau-Remington F."/>
        </authorList>
    </citation>
    <scope>NUCLEOTIDE SEQUENCE [LARGE SCALE GENOMIC DNA]</scope>
    <source>
        <strain>USA300</strain>
    </source>
</reference>
<protein>
    <recommendedName>
        <fullName>4,4'-diaponeurosporenoate glycosyltransferase</fullName>
        <ecNumber>2.4.1.-</ecNumber>
    </recommendedName>
</protein>
<sequence>MKWLSRILTVIVTMSMACGALIFNRRHQLKAKTLNFNHKALTIIIPARNEEKRIGHLLHSIIQQQVPVDVIVMNDGSTDETARVARSYGATVVDVVDDTDGKWYGKSHACYQGVTHACTNRIAFVDADVTFLRKDAVETLINQYQLQGEKGLLSVQPYHITKRFYEGFSAIFNLMTVVGMNVFSTLDDGRTNQHAFGPVTLTNKEDYYATGGHKSANRHIIEGFALGSAYTSQSLPVTVYEGFPFVAFRMYQEGFQSLQEGWTKHLSTGAGGTKPKIMTAIVLWLFGSIASILGLCLSLKYRQMSVRKMVALYLSYTTQFIYLHRRVGQFSNLLMVCHPLLFMFFTKIFIQSWKQTHRYGVVEWKGRQYSISKEQ</sequence>
<name>CRTQ_STAA3</name>
<proteinExistence type="inferred from homology"/>
<feature type="chain" id="PRO_0000284866" description="4,4'-diaponeurosporenoate glycosyltransferase">
    <location>
        <begin position="1"/>
        <end position="375"/>
    </location>
</feature>
<feature type="transmembrane region" description="Helical" evidence="2">
    <location>
        <begin position="3"/>
        <end position="23"/>
    </location>
</feature>
<feature type="transmembrane region" description="Helical" evidence="2">
    <location>
        <begin position="164"/>
        <end position="184"/>
    </location>
</feature>
<feature type="transmembrane region" description="Helical" evidence="2">
    <location>
        <begin position="277"/>
        <end position="297"/>
    </location>
</feature>
<feature type="transmembrane region" description="Helical" evidence="2">
    <location>
        <begin position="330"/>
        <end position="350"/>
    </location>
</feature>
<organism>
    <name type="scientific">Staphylococcus aureus (strain USA300)</name>
    <dbReference type="NCBI Taxonomy" id="367830"/>
    <lineage>
        <taxon>Bacteria</taxon>
        <taxon>Bacillati</taxon>
        <taxon>Bacillota</taxon>
        <taxon>Bacilli</taxon>
        <taxon>Bacillales</taxon>
        <taxon>Staphylococcaceae</taxon>
        <taxon>Staphylococcus</taxon>
    </lineage>
</organism>
<gene>
    <name type="primary">crtQ</name>
    <name type="ordered locus">SAUSA300_2500</name>
</gene>
<comment type="function">
    <text evidence="1">Catalyzes the glycosylation of 4,4'-diaponeurosporenoate, i.e. the esterification of glucose at the C1'' position with the carboxyl group of 4,4'-diaponeurosporenic acid, to form glycosyl-4,4'-diaponeurosporenoate. This is a step in the biosynthesis of staphyloxanthin, an orange pigment present in most staphylococci strains (By similarity).</text>
</comment>
<comment type="pathway">
    <text>Carotenoid biosynthesis; staphyloxanthin biosynthesis; staphyloxanthin from farnesyl diphosphate: step 4/5.</text>
</comment>
<comment type="subcellular location">
    <subcellularLocation>
        <location evidence="3">Cell membrane</location>
        <topology evidence="3">Multi-pass membrane protein</topology>
    </subcellularLocation>
</comment>
<comment type="similarity">
    <text evidence="3">Belongs to the glycosyltransferase 2 family. CrtQ subfamily.</text>
</comment>
<dbReference type="EC" id="2.4.1.-"/>
<dbReference type="EMBL" id="CP000255">
    <property type="protein sequence ID" value="ABD21704.1"/>
    <property type="molecule type" value="Genomic_DNA"/>
</dbReference>
<dbReference type="RefSeq" id="WP_000871731.1">
    <property type="nucleotide sequence ID" value="NZ_CP027476.1"/>
</dbReference>
<dbReference type="SMR" id="Q2FDU4"/>
<dbReference type="KEGG" id="saa:SAUSA300_2500"/>
<dbReference type="HOGENOM" id="CLU_038143_1_0_9"/>
<dbReference type="UniPathway" id="UPA00029">
    <property type="reaction ID" value="UER00559"/>
</dbReference>
<dbReference type="Proteomes" id="UP000001939">
    <property type="component" value="Chromosome"/>
</dbReference>
<dbReference type="GO" id="GO:0005886">
    <property type="term" value="C:plasma membrane"/>
    <property type="evidence" value="ECO:0007669"/>
    <property type="project" value="UniProtKB-SubCell"/>
</dbReference>
<dbReference type="GO" id="GO:0016757">
    <property type="term" value="F:glycosyltransferase activity"/>
    <property type="evidence" value="ECO:0007669"/>
    <property type="project" value="UniProtKB-KW"/>
</dbReference>
<dbReference type="GO" id="GO:0016117">
    <property type="term" value="P:carotenoid biosynthetic process"/>
    <property type="evidence" value="ECO:0007669"/>
    <property type="project" value="UniProtKB-KW"/>
</dbReference>
<dbReference type="CDD" id="cd00761">
    <property type="entry name" value="Glyco_tranf_GTA_type"/>
    <property type="match status" value="1"/>
</dbReference>
<dbReference type="FunFam" id="3.90.550.10:FF:000172">
    <property type="entry name" value="Hpnb"/>
    <property type="match status" value="1"/>
</dbReference>
<dbReference type="Gene3D" id="3.90.550.10">
    <property type="entry name" value="Spore Coat Polysaccharide Biosynthesis Protein SpsA, Chain A"/>
    <property type="match status" value="1"/>
</dbReference>
<dbReference type="InterPro" id="IPR001173">
    <property type="entry name" value="Glyco_trans_2-like"/>
</dbReference>
<dbReference type="InterPro" id="IPR029044">
    <property type="entry name" value="Nucleotide-diphossugar_trans"/>
</dbReference>
<dbReference type="PANTHER" id="PTHR43646">
    <property type="entry name" value="GLYCOSYLTRANSFERASE"/>
    <property type="match status" value="1"/>
</dbReference>
<dbReference type="PANTHER" id="PTHR43646:SF2">
    <property type="entry name" value="GLYCOSYLTRANSFERASE 2-LIKE DOMAIN-CONTAINING PROTEIN"/>
    <property type="match status" value="1"/>
</dbReference>
<dbReference type="Pfam" id="PF00535">
    <property type="entry name" value="Glycos_transf_2"/>
    <property type="match status" value="1"/>
</dbReference>
<dbReference type="SUPFAM" id="SSF53448">
    <property type="entry name" value="Nucleotide-diphospho-sugar transferases"/>
    <property type="match status" value="1"/>
</dbReference>
<keyword id="KW-0125">Carotenoid biosynthesis</keyword>
<keyword id="KW-1003">Cell membrane</keyword>
<keyword id="KW-0328">Glycosyltransferase</keyword>
<keyword id="KW-0472">Membrane</keyword>
<keyword id="KW-0808">Transferase</keyword>
<keyword id="KW-0812">Transmembrane</keyword>
<keyword id="KW-1133">Transmembrane helix</keyword>
<evidence type="ECO:0000250" key="1"/>
<evidence type="ECO:0000255" key="2"/>
<evidence type="ECO:0000305" key="3"/>
<accession>Q2FDU4</accession>